<keyword id="KW-0131">Cell cycle</keyword>
<keyword id="KW-0132">Cell division</keyword>
<keyword id="KW-0143">Chaperone</keyword>
<keyword id="KW-0963">Cytoplasm</keyword>
<keyword id="KW-0413">Isomerase</keyword>
<keyword id="KW-1185">Reference proteome</keyword>
<keyword id="KW-0697">Rotamase</keyword>
<dbReference type="EC" id="5.2.1.8"/>
<dbReference type="EMBL" id="AE004439">
    <property type="protein sequence ID" value="AAK04059.1"/>
    <property type="molecule type" value="Genomic_DNA"/>
</dbReference>
<dbReference type="RefSeq" id="WP_010907432.1">
    <property type="nucleotide sequence ID" value="NC_002663.1"/>
</dbReference>
<dbReference type="SMR" id="P57980"/>
<dbReference type="STRING" id="272843.PM1975"/>
<dbReference type="EnsemblBacteria" id="AAK04059">
    <property type="protein sequence ID" value="AAK04059"/>
    <property type="gene ID" value="PM1975"/>
</dbReference>
<dbReference type="KEGG" id="pmu:PM1975"/>
<dbReference type="PATRIC" id="fig|272843.6.peg.1998"/>
<dbReference type="HOGENOM" id="CLU_033058_2_0_6"/>
<dbReference type="OrthoDB" id="9767721at2"/>
<dbReference type="Proteomes" id="UP000000809">
    <property type="component" value="Chromosome"/>
</dbReference>
<dbReference type="GO" id="GO:0005737">
    <property type="term" value="C:cytoplasm"/>
    <property type="evidence" value="ECO:0007669"/>
    <property type="project" value="UniProtKB-SubCell"/>
</dbReference>
<dbReference type="GO" id="GO:0003755">
    <property type="term" value="F:peptidyl-prolyl cis-trans isomerase activity"/>
    <property type="evidence" value="ECO:0007669"/>
    <property type="project" value="UniProtKB-UniRule"/>
</dbReference>
<dbReference type="GO" id="GO:0044183">
    <property type="term" value="F:protein folding chaperone"/>
    <property type="evidence" value="ECO:0007669"/>
    <property type="project" value="TreeGrafter"/>
</dbReference>
<dbReference type="GO" id="GO:0043022">
    <property type="term" value="F:ribosome binding"/>
    <property type="evidence" value="ECO:0007669"/>
    <property type="project" value="TreeGrafter"/>
</dbReference>
<dbReference type="GO" id="GO:0051083">
    <property type="term" value="P:'de novo' cotranslational protein folding"/>
    <property type="evidence" value="ECO:0007669"/>
    <property type="project" value="TreeGrafter"/>
</dbReference>
<dbReference type="GO" id="GO:0051301">
    <property type="term" value="P:cell division"/>
    <property type="evidence" value="ECO:0007669"/>
    <property type="project" value="UniProtKB-KW"/>
</dbReference>
<dbReference type="GO" id="GO:0061077">
    <property type="term" value="P:chaperone-mediated protein folding"/>
    <property type="evidence" value="ECO:0007669"/>
    <property type="project" value="TreeGrafter"/>
</dbReference>
<dbReference type="GO" id="GO:0015031">
    <property type="term" value="P:protein transport"/>
    <property type="evidence" value="ECO:0007669"/>
    <property type="project" value="UniProtKB-UniRule"/>
</dbReference>
<dbReference type="GO" id="GO:0043335">
    <property type="term" value="P:protein unfolding"/>
    <property type="evidence" value="ECO:0007669"/>
    <property type="project" value="TreeGrafter"/>
</dbReference>
<dbReference type="FunFam" id="3.10.50.40:FF:000001">
    <property type="entry name" value="Trigger factor"/>
    <property type="match status" value="1"/>
</dbReference>
<dbReference type="Gene3D" id="3.10.50.40">
    <property type="match status" value="1"/>
</dbReference>
<dbReference type="Gene3D" id="3.30.70.1050">
    <property type="entry name" value="Trigger factor ribosome-binding domain"/>
    <property type="match status" value="1"/>
</dbReference>
<dbReference type="Gene3D" id="1.10.3120.10">
    <property type="entry name" value="Trigger factor, C-terminal domain"/>
    <property type="match status" value="1"/>
</dbReference>
<dbReference type="HAMAP" id="MF_00303">
    <property type="entry name" value="Trigger_factor_Tig"/>
    <property type="match status" value="1"/>
</dbReference>
<dbReference type="InterPro" id="IPR046357">
    <property type="entry name" value="PPIase_dom_sf"/>
</dbReference>
<dbReference type="InterPro" id="IPR001179">
    <property type="entry name" value="PPIase_FKBP_dom"/>
</dbReference>
<dbReference type="InterPro" id="IPR005215">
    <property type="entry name" value="Trig_fac"/>
</dbReference>
<dbReference type="InterPro" id="IPR008880">
    <property type="entry name" value="Trigger_fac_C"/>
</dbReference>
<dbReference type="InterPro" id="IPR037041">
    <property type="entry name" value="Trigger_fac_C_sf"/>
</dbReference>
<dbReference type="InterPro" id="IPR008881">
    <property type="entry name" value="Trigger_fac_ribosome-bd_bac"/>
</dbReference>
<dbReference type="InterPro" id="IPR036611">
    <property type="entry name" value="Trigger_fac_ribosome-bd_sf"/>
</dbReference>
<dbReference type="InterPro" id="IPR027304">
    <property type="entry name" value="Trigger_fact/SurA_dom_sf"/>
</dbReference>
<dbReference type="NCBIfam" id="TIGR00115">
    <property type="entry name" value="tig"/>
    <property type="match status" value="1"/>
</dbReference>
<dbReference type="PANTHER" id="PTHR30560">
    <property type="entry name" value="TRIGGER FACTOR CHAPERONE AND PEPTIDYL-PROLYL CIS/TRANS ISOMERASE"/>
    <property type="match status" value="1"/>
</dbReference>
<dbReference type="PANTHER" id="PTHR30560:SF3">
    <property type="entry name" value="TRIGGER FACTOR-LIKE PROTEIN TIG, CHLOROPLASTIC"/>
    <property type="match status" value="1"/>
</dbReference>
<dbReference type="Pfam" id="PF00254">
    <property type="entry name" value="FKBP_C"/>
    <property type="match status" value="1"/>
</dbReference>
<dbReference type="Pfam" id="PF05698">
    <property type="entry name" value="Trigger_C"/>
    <property type="match status" value="1"/>
</dbReference>
<dbReference type="Pfam" id="PF05697">
    <property type="entry name" value="Trigger_N"/>
    <property type="match status" value="1"/>
</dbReference>
<dbReference type="PIRSF" id="PIRSF003095">
    <property type="entry name" value="Trigger_factor"/>
    <property type="match status" value="1"/>
</dbReference>
<dbReference type="SUPFAM" id="SSF54534">
    <property type="entry name" value="FKBP-like"/>
    <property type="match status" value="1"/>
</dbReference>
<dbReference type="SUPFAM" id="SSF109998">
    <property type="entry name" value="Triger factor/SurA peptide-binding domain-like"/>
    <property type="match status" value="1"/>
</dbReference>
<dbReference type="SUPFAM" id="SSF102735">
    <property type="entry name" value="Trigger factor ribosome-binding domain"/>
    <property type="match status" value="1"/>
</dbReference>
<dbReference type="PROSITE" id="PS50059">
    <property type="entry name" value="FKBP_PPIASE"/>
    <property type="match status" value="1"/>
</dbReference>
<reference key="1">
    <citation type="journal article" date="2001" name="Proc. Natl. Acad. Sci. U.S.A.">
        <title>Complete genomic sequence of Pasteurella multocida Pm70.</title>
        <authorList>
            <person name="May B.J."/>
            <person name="Zhang Q."/>
            <person name="Li L.L."/>
            <person name="Paustian M.L."/>
            <person name="Whittam T.S."/>
            <person name="Kapur V."/>
        </authorList>
    </citation>
    <scope>NUCLEOTIDE SEQUENCE [LARGE SCALE GENOMIC DNA]</scope>
    <source>
        <strain>Pm70</strain>
    </source>
</reference>
<feature type="chain" id="PRO_0000179401" description="Trigger factor">
    <location>
        <begin position="1"/>
        <end position="432"/>
    </location>
</feature>
<feature type="domain" description="PPIase FKBP-type">
    <location>
        <begin position="161"/>
        <end position="246"/>
    </location>
</feature>
<protein>
    <recommendedName>
        <fullName>Trigger factor</fullName>
        <shortName>TF</shortName>
        <ecNumber>5.2.1.8</ecNumber>
    </recommendedName>
    <alternativeName>
        <fullName>PPIase</fullName>
    </alternativeName>
</protein>
<gene>
    <name type="primary">tig</name>
    <name type="ordered locus">PM1975</name>
</gene>
<accession>P57980</accession>
<name>TIG_PASMU</name>
<organism>
    <name type="scientific">Pasteurella multocida (strain Pm70)</name>
    <dbReference type="NCBI Taxonomy" id="272843"/>
    <lineage>
        <taxon>Bacteria</taxon>
        <taxon>Pseudomonadati</taxon>
        <taxon>Pseudomonadota</taxon>
        <taxon>Gammaproteobacteria</taxon>
        <taxon>Pasteurellales</taxon>
        <taxon>Pasteurellaceae</taxon>
        <taxon>Pasteurella</taxon>
    </lineage>
</organism>
<proteinExistence type="inferred from homology"/>
<evidence type="ECO:0000250" key="1"/>
<evidence type="ECO:0000305" key="2"/>
<comment type="function">
    <text evidence="1">Involved in protein export. Acts as a chaperone by maintaining the newly synthesized protein in an open conformation. Functions as a peptidyl-prolyl cis-trans isomerase (By similarity).</text>
</comment>
<comment type="catalytic activity">
    <reaction>
        <text>[protein]-peptidylproline (omega=180) = [protein]-peptidylproline (omega=0)</text>
        <dbReference type="Rhea" id="RHEA:16237"/>
        <dbReference type="Rhea" id="RHEA-COMP:10747"/>
        <dbReference type="Rhea" id="RHEA-COMP:10748"/>
        <dbReference type="ChEBI" id="CHEBI:83833"/>
        <dbReference type="ChEBI" id="CHEBI:83834"/>
        <dbReference type="EC" id="5.2.1.8"/>
    </reaction>
</comment>
<comment type="subcellular location">
    <subcellularLocation>
        <location>Cytoplasm</location>
    </subcellularLocation>
    <text evidence="1">About half TF is bound to the ribosome near the polypeptide exit tunnel while the other half is free in the cytoplasm.</text>
</comment>
<comment type="domain">
    <text evidence="1">Consists of 3 domains; the N-terminus binds the ribosome, the middle domain has PPIase activity, while the C-terminus has intrinsic chaperone activity on its own.</text>
</comment>
<comment type="similarity">
    <text evidence="2">Belongs to the FKBP-type PPIase family. Tig subfamily.</text>
</comment>
<sequence>MSFTIETTQGLERRVQITVPADTVEGAVREELKRVAKTARVDGFRKGKVPPHIIEKRFGASVRHDVLGDVLQSHFFNVVMEQKVNLAGRPAFAVEQFEAGKDLVFTATFEVYPEVALQGLDQIKVEKPVVEISEADIDKMIDVLRKQQATWAETAEAASAEDRVVIDFVGSVDGEVFEGGKAEDFTLFMGQGRMIPGFEEGIVGHKAGEQFDIDVTFPEEYHAENLKGKAAKFAITLKKVEVMVLPELTDEFVAKFGPNTKTVDDLRNEIRKNMQRELKNALTAKVKGQVIDGLLAQNAIDVPASAVEQEIEVLRGQAAQRFGGNKEQAAQLPRELFEEQAKRRVQVGLLLAEVIASHELKVDEARAKTMIEEIASAYEQPAEVVEYYSKNKELMNNIRNVVLEEQAVDAVLAKAQVTEKAASFDDVMNPQA</sequence>